<protein>
    <recommendedName>
        <fullName evidence="1">RNase adapter protein RapZ</fullName>
    </recommendedName>
</protein>
<accession>B7MBX4</accession>
<sequence>MVLMIVSGRSGSGKSVALRALEDMGFYCVDNLPVVLLPDLARTLADREISAAVSIDVRNMPESPEIFEQAMSNLPDAFSPQLLFLDADRNTLIRRYSDTRRLHPLSSKNLSLESAIDKESDLLEPLRSRADLIVDTSEMSVHELAEMLRTRLLGKRERELTMVFESFGFKHGIPIDADYVFDVRFLPNPHWDPKLRPMTGLDKPVAAFLDRHTEVHNFIYQTRSYLELWLPMLETNNRSYLTVAIGCTGGKHRSVYIAEQLADYFRSRGKNVQSRHRTLEKRKP</sequence>
<reference key="1">
    <citation type="journal article" date="2009" name="PLoS Genet.">
        <title>Organised genome dynamics in the Escherichia coli species results in highly diverse adaptive paths.</title>
        <authorList>
            <person name="Touchon M."/>
            <person name="Hoede C."/>
            <person name="Tenaillon O."/>
            <person name="Barbe V."/>
            <person name="Baeriswyl S."/>
            <person name="Bidet P."/>
            <person name="Bingen E."/>
            <person name="Bonacorsi S."/>
            <person name="Bouchier C."/>
            <person name="Bouvet O."/>
            <person name="Calteau A."/>
            <person name="Chiapello H."/>
            <person name="Clermont O."/>
            <person name="Cruveiller S."/>
            <person name="Danchin A."/>
            <person name="Diard M."/>
            <person name="Dossat C."/>
            <person name="Karoui M.E."/>
            <person name="Frapy E."/>
            <person name="Garry L."/>
            <person name="Ghigo J.M."/>
            <person name="Gilles A.M."/>
            <person name="Johnson J."/>
            <person name="Le Bouguenec C."/>
            <person name="Lescat M."/>
            <person name="Mangenot S."/>
            <person name="Martinez-Jehanne V."/>
            <person name="Matic I."/>
            <person name="Nassif X."/>
            <person name="Oztas S."/>
            <person name="Petit M.A."/>
            <person name="Pichon C."/>
            <person name="Rouy Z."/>
            <person name="Ruf C.S."/>
            <person name="Schneider D."/>
            <person name="Tourret J."/>
            <person name="Vacherie B."/>
            <person name="Vallenet D."/>
            <person name="Medigue C."/>
            <person name="Rocha E.P.C."/>
            <person name="Denamur E."/>
        </authorList>
    </citation>
    <scope>NUCLEOTIDE SEQUENCE [LARGE SCALE GENOMIC DNA]</scope>
    <source>
        <strain>S88 / ExPEC</strain>
    </source>
</reference>
<organism>
    <name type="scientific">Escherichia coli O45:K1 (strain S88 / ExPEC)</name>
    <dbReference type="NCBI Taxonomy" id="585035"/>
    <lineage>
        <taxon>Bacteria</taxon>
        <taxon>Pseudomonadati</taxon>
        <taxon>Pseudomonadota</taxon>
        <taxon>Gammaproteobacteria</taxon>
        <taxon>Enterobacterales</taxon>
        <taxon>Enterobacteriaceae</taxon>
        <taxon>Escherichia</taxon>
    </lineage>
</organism>
<name>RAPZ_ECO45</name>
<feature type="chain" id="PRO_1000130748" description="RNase adapter protein RapZ">
    <location>
        <begin position="1"/>
        <end position="284"/>
    </location>
</feature>
<feature type="region of interest" description="RNA-binding" evidence="1">
    <location>
        <begin position="266"/>
        <end position="284"/>
    </location>
</feature>
<feature type="binding site" evidence="1">
    <location>
        <begin position="8"/>
        <end position="15"/>
    </location>
    <ligand>
        <name>ATP</name>
        <dbReference type="ChEBI" id="CHEBI:30616"/>
    </ligand>
</feature>
<feature type="binding site" evidence="1">
    <location>
        <begin position="56"/>
        <end position="59"/>
    </location>
    <ligand>
        <name>GTP</name>
        <dbReference type="ChEBI" id="CHEBI:37565"/>
    </ligand>
</feature>
<comment type="function">
    <text evidence="1">Modulates the synthesis of GlmS, by affecting the processing and stability of the regulatory small RNA GlmZ. When glucosamine-6-phosphate (GlcN6P) concentrations are high in the cell, RapZ binds GlmZ and targets it to cleavage by RNase E. Consequently, GlmZ is inactivated and unable to activate GlmS synthesis. Under low GlcN6P concentrations, RapZ is sequestered and inactivated by an other regulatory small RNA, GlmY, preventing GlmZ degradation and leading to synthesis of GlmS.</text>
</comment>
<comment type="subunit">
    <text evidence="1">Homotrimer.</text>
</comment>
<comment type="similarity">
    <text evidence="1">Belongs to the RapZ-like family. RapZ subfamily.</text>
</comment>
<keyword id="KW-0067">ATP-binding</keyword>
<keyword id="KW-0342">GTP-binding</keyword>
<keyword id="KW-0547">Nucleotide-binding</keyword>
<keyword id="KW-1185">Reference proteome</keyword>
<keyword id="KW-0694">RNA-binding</keyword>
<proteinExistence type="inferred from homology"/>
<gene>
    <name evidence="1" type="primary">rapZ</name>
    <name type="ordered locus">ECS88_3588</name>
</gene>
<dbReference type="EMBL" id="CU928161">
    <property type="protein sequence ID" value="CAR04815.1"/>
    <property type="molecule type" value="Genomic_DNA"/>
</dbReference>
<dbReference type="RefSeq" id="WP_000243741.1">
    <property type="nucleotide sequence ID" value="NC_011742.1"/>
</dbReference>
<dbReference type="SMR" id="B7MBX4"/>
<dbReference type="GeneID" id="93778776"/>
<dbReference type="KEGG" id="ecz:ECS88_3588"/>
<dbReference type="HOGENOM" id="CLU_059558_1_1_6"/>
<dbReference type="Proteomes" id="UP000000747">
    <property type="component" value="Chromosome"/>
</dbReference>
<dbReference type="GO" id="GO:0005524">
    <property type="term" value="F:ATP binding"/>
    <property type="evidence" value="ECO:0007669"/>
    <property type="project" value="UniProtKB-UniRule"/>
</dbReference>
<dbReference type="GO" id="GO:0005525">
    <property type="term" value="F:GTP binding"/>
    <property type="evidence" value="ECO:0007669"/>
    <property type="project" value="UniProtKB-UniRule"/>
</dbReference>
<dbReference type="GO" id="GO:0003723">
    <property type="term" value="F:RNA binding"/>
    <property type="evidence" value="ECO:0007669"/>
    <property type="project" value="UniProtKB-KW"/>
</dbReference>
<dbReference type="Gene3D" id="3.40.50.300">
    <property type="entry name" value="P-loop containing nucleotide triphosphate hydrolases"/>
    <property type="match status" value="1"/>
</dbReference>
<dbReference type="HAMAP" id="MF_00636">
    <property type="entry name" value="RapZ_like"/>
    <property type="match status" value="1"/>
</dbReference>
<dbReference type="InterPro" id="IPR027417">
    <property type="entry name" value="P-loop_NTPase"/>
</dbReference>
<dbReference type="InterPro" id="IPR005337">
    <property type="entry name" value="RapZ-like"/>
</dbReference>
<dbReference type="InterPro" id="IPR053930">
    <property type="entry name" value="RapZ-like_N"/>
</dbReference>
<dbReference type="InterPro" id="IPR053931">
    <property type="entry name" value="RapZ_C"/>
</dbReference>
<dbReference type="NCBIfam" id="NF003828">
    <property type="entry name" value="PRK05416.1"/>
    <property type="match status" value="1"/>
</dbReference>
<dbReference type="PANTHER" id="PTHR30448">
    <property type="entry name" value="RNASE ADAPTER PROTEIN RAPZ"/>
    <property type="match status" value="1"/>
</dbReference>
<dbReference type="PANTHER" id="PTHR30448:SF0">
    <property type="entry name" value="RNASE ADAPTER PROTEIN RAPZ"/>
    <property type="match status" value="1"/>
</dbReference>
<dbReference type="Pfam" id="PF22740">
    <property type="entry name" value="PapZ_C"/>
    <property type="match status" value="1"/>
</dbReference>
<dbReference type="Pfam" id="PF03668">
    <property type="entry name" value="RapZ-like_N"/>
    <property type="match status" value="1"/>
</dbReference>
<dbReference type="PIRSF" id="PIRSF005052">
    <property type="entry name" value="P-loopkin"/>
    <property type="match status" value="1"/>
</dbReference>
<dbReference type="SUPFAM" id="SSF52540">
    <property type="entry name" value="P-loop containing nucleoside triphosphate hydrolases"/>
    <property type="match status" value="1"/>
</dbReference>
<evidence type="ECO:0000255" key="1">
    <source>
        <dbReference type="HAMAP-Rule" id="MF_00636"/>
    </source>
</evidence>